<name>ACPS_STRP3</name>
<organism>
    <name type="scientific">Streptococcus pyogenes serotype M3 (strain ATCC BAA-595 / MGAS315)</name>
    <dbReference type="NCBI Taxonomy" id="198466"/>
    <lineage>
        <taxon>Bacteria</taxon>
        <taxon>Bacillati</taxon>
        <taxon>Bacillota</taxon>
        <taxon>Bacilli</taxon>
        <taxon>Lactobacillales</taxon>
        <taxon>Streptococcaceae</taxon>
        <taxon>Streptococcus</taxon>
    </lineage>
</organism>
<gene>
    <name evidence="1" type="primary">acpS</name>
    <name type="ordered locus">SpyM3_1564</name>
</gene>
<accession>P0CZ50</accession>
<accession>P63473</accession>
<accession>Q8NZK3</accession>
<sequence>MIVGHGIDLQEISAIEKVYQRNPRFAQKILTEQELAIFESFPYKRRLSYLAGRWSGKEAFAKAIGTGIGRLTFQDIEILNDVRGCPILTKSPFKGNSFISISHSGNYVQASVILEDKK</sequence>
<keyword id="KW-0963">Cytoplasm</keyword>
<keyword id="KW-0275">Fatty acid biosynthesis</keyword>
<keyword id="KW-0276">Fatty acid metabolism</keyword>
<keyword id="KW-0444">Lipid biosynthesis</keyword>
<keyword id="KW-0443">Lipid metabolism</keyword>
<keyword id="KW-0460">Magnesium</keyword>
<keyword id="KW-0479">Metal-binding</keyword>
<keyword id="KW-0808">Transferase</keyword>
<reference key="1">
    <citation type="journal article" date="2002" name="Proc. Natl. Acad. Sci. U.S.A.">
        <title>Genome sequence of a serotype M3 strain of group A Streptococcus: phage-encoded toxins, the high-virulence phenotype, and clone emergence.</title>
        <authorList>
            <person name="Beres S.B."/>
            <person name="Sylva G.L."/>
            <person name="Barbian K.D."/>
            <person name="Lei B."/>
            <person name="Hoff J.S."/>
            <person name="Mammarella N.D."/>
            <person name="Liu M.-Y."/>
            <person name="Smoot J.C."/>
            <person name="Porcella S.F."/>
            <person name="Parkins L.D."/>
            <person name="Campbell D.S."/>
            <person name="Smith T.M."/>
            <person name="McCormick J.K."/>
            <person name="Leung D.Y.M."/>
            <person name="Schlievert P.M."/>
            <person name="Musser J.M."/>
        </authorList>
    </citation>
    <scope>NUCLEOTIDE SEQUENCE [LARGE SCALE GENOMIC DNA]</scope>
    <source>
        <strain>ATCC BAA-595 / MGAS315</strain>
    </source>
</reference>
<feature type="chain" id="PRO_0000175716" description="Holo-[acyl-carrier-protein] synthase">
    <location>
        <begin position="1"/>
        <end position="118"/>
    </location>
</feature>
<feature type="binding site" evidence="1">
    <location>
        <position position="8"/>
    </location>
    <ligand>
        <name>Mg(2+)</name>
        <dbReference type="ChEBI" id="CHEBI:18420"/>
    </ligand>
</feature>
<feature type="binding site" evidence="1">
    <location>
        <position position="58"/>
    </location>
    <ligand>
        <name>Mg(2+)</name>
        <dbReference type="ChEBI" id="CHEBI:18420"/>
    </ligand>
</feature>
<evidence type="ECO:0000255" key="1">
    <source>
        <dbReference type="HAMAP-Rule" id="MF_00101"/>
    </source>
</evidence>
<dbReference type="EC" id="2.7.8.7" evidence="1"/>
<dbReference type="EMBL" id="AE014074">
    <property type="protein sequence ID" value="AAM80171.1"/>
    <property type="molecule type" value="Genomic_DNA"/>
</dbReference>
<dbReference type="RefSeq" id="WP_002983199.1">
    <property type="nucleotide sequence ID" value="NC_004070.1"/>
</dbReference>
<dbReference type="SMR" id="P0CZ50"/>
<dbReference type="GeneID" id="69900361"/>
<dbReference type="KEGG" id="spg:SpyM3_1564"/>
<dbReference type="HOGENOM" id="CLU_089696_1_2_9"/>
<dbReference type="Proteomes" id="UP000000564">
    <property type="component" value="Chromosome"/>
</dbReference>
<dbReference type="GO" id="GO:0005737">
    <property type="term" value="C:cytoplasm"/>
    <property type="evidence" value="ECO:0007669"/>
    <property type="project" value="UniProtKB-SubCell"/>
</dbReference>
<dbReference type="GO" id="GO:0008897">
    <property type="term" value="F:holo-[acyl-carrier-protein] synthase activity"/>
    <property type="evidence" value="ECO:0007669"/>
    <property type="project" value="UniProtKB-UniRule"/>
</dbReference>
<dbReference type="GO" id="GO:0000287">
    <property type="term" value="F:magnesium ion binding"/>
    <property type="evidence" value="ECO:0007669"/>
    <property type="project" value="UniProtKB-UniRule"/>
</dbReference>
<dbReference type="GO" id="GO:0006633">
    <property type="term" value="P:fatty acid biosynthetic process"/>
    <property type="evidence" value="ECO:0007669"/>
    <property type="project" value="UniProtKB-UniRule"/>
</dbReference>
<dbReference type="Gene3D" id="3.90.470.20">
    <property type="entry name" value="4'-phosphopantetheinyl transferase domain"/>
    <property type="match status" value="1"/>
</dbReference>
<dbReference type="HAMAP" id="MF_00101">
    <property type="entry name" value="AcpS"/>
    <property type="match status" value="1"/>
</dbReference>
<dbReference type="InterPro" id="IPR008278">
    <property type="entry name" value="4-PPantetheinyl_Trfase_dom"/>
</dbReference>
<dbReference type="InterPro" id="IPR037143">
    <property type="entry name" value="4-PPantetheinyl_Trfase_dom_sf"/>
</dbReference>
<dbReference type="InterPro" id="IPR002582">
    <property type="entry name" value="ACPS"/>
</dbReference>
<dbReference type="InterPro" id="IPR004568">
    <property type="entry name" value="Ppantetheine-prot_Trfase_dom"/>
</dbReference>
<dbReference type="NCBIfam" id="TIGR00516">
    <property type="entry name" value="acpS"/>
    <property type="match status" value="1"/>
</dbReference>
<dbReference type="NCBIfam" id="TIGR00556">
    <property type="entry name" value="pantethn_trn"/>
    <property type="match status" value="1"/>
</dbReference>
<dbReference type="Pfam" id="PF01648">
    <property type="entry name" value="ACPS"/>
    <property type="match status" value="1"/>
</dbReference>
<dbReference type="SUPFAM" id="SSF56214">
    <property type="entry name" value="4'-phosphopantetheinyl transferase"/>
    <property type="match status" value="1"/>
</dbReference>
<proteinExistence type="inferred from homology"/>
<protein>
    <recommendedName>
        <fullName evidence="1">Holo-[acyl-carrier-protein] synthase</fullName>
        <shortName evidence="1">Holo-ACP synthase</shortName>
        <ecNumber evidence="1">2.7.8.7</ecNumber>
    </recommendedName>
    <alternativeName>
        <fullName evidence="1">4'-phosphopantetheinyl transferase AcpS</fullName>
    </alternativeName>
</protein>
<comment type="function">
    <text evidence="1">Transfers the 4'-phosphopantetheine moiety from coenzyme A to a Ser of acyl-carrier-protein.</text>
</comment>
<comment type="catalytic activity">
    <reaction evidence="1">
        <text>apo-[ACP] + CoA = holo-[ACP] + adenosine 3',5'-bisphosphate + H(+)</text>
        <dbReference type="Rhea" id="RHEA:12068"/>
        <dbReference type="Rhea" id="RHEA-COMP:9685"/>
        <dbReference type="Rhea" id="RHEA-COMP:9690"/>
        <dbReference type="ChEBI" id="CHEBI:15378"/>
        <dbReference type="ChEBI" id="CHEBI:29999"/>
        <dbReference type="ChEBI" id="CHEBI:57287"/>
        <dbReference type="ChEBI" id="CHEBI:58343"/>
        <dbReference type="ChEBI" id="CHEBI:64479"/>
        <dbReference type="EC" id="2.7.8.7"/>
    </reaction>
</comment>
<comment type="cofactor">
    <cofactor evidence="1">
        <name>Mg(2+)</name>
        <dbReference type="ChEBI" id="CHEBI:18420"/>
    </cofactor>
</comment>
<comment type="subcellular location">
    <subcellularLocation>
        <location evidence="1">Cytoplasm</location>
    </subcellularLocation>
</comment>
<comment type="similarity">
    <text evidence="1">Belongs to the P-Pant transferase superfamily. AcpS family.</text>
</comment>